<name>NOSL_ACHCY</name>
<organism>
    <name type="scientific">Achromobacter cycloclastes</name>
    <dbReference type="NCBI Taxonomy" id="223"/>
    <lineage>
        <taxon>Bacteria</taxon>
        <taxon>Pseudomonadati</taxon>
        <taxon>Pseudomonadota</taxon>
        <taxon>Betaproteobacteria</taxon>
        <taxon>Burkholderiales</taxon>
        <taxon>Alcaligenaceae</taxon>
        <taxon>Achromobacter</taxon>
    </lineage>
</organism>
<reference key="1">
    <citation type="journal article" date="1998" name="DNA Res.">
        <title>Analysis of the nitrous oxide reduction genes, nosZDFYL, of Achromobacter cycloclastes.</title>
        <authorList>
            <person name="Inatomi K."/>
        </authorList>
    </citation>
    <scope>NUCLEOTIDE SEQUENCE [GENOMIC DNA]</scope>
    <source>
        <strain>ATCC 21921 / JCM 20009 / IAM 1013 / KCTC 2947 / LMG 1127 / NBRC 102459 / An-17</strain>
    </source>
</reference>
<reference key="2">
    <citation type="journal article" date="1998" name="J. Inorg. Biochem.">
        <title>The nos (nitrous oxide reductase) gene cluster from the soil bacterium Achromobacter cycloclastes: cloning, sequence analysis, and expression.</title>
        <authorList>
            <person name="McGuirl M.A."/>
            <person name="Nelson L.K."/>
            <person name="Bollinger J.A."/>
            <person name="Chan Y.-K."/>
            <person name="Dooley D.M."/>
        </authorList>
    </citation>
    <scope>NUCLEOTIDE SEQUENCE [GENOMIC DNA]</scope>
    <source>
        <strain>ATCC 21921 / JCM 20009 / IAM 1013 / KCTC 2947 / LMG 1127 / NBRC 102459 / An-17</strain>
    </source>
</reference>
<reference key="3">
    <citation type="journal article" date="2001" name="J. Biol. Inorg. Chem.">
        <title>Expression, purification, and characterization of NosL, a novel Cu(I) protein of the nitrous oxide reductase (nos) gene cluster.</title>
        <authorList>
            <person name="McGuirl M.A."/>
            <person name="Bollinger J.A."/>
            <person name="Cosper N."/>
            <person name="Scott R.A."/>
            <person name="Dooley D.M."/>
        </authorList>
    </citation>
    <scope>FUNCTION</scope>
    <scope>SUBUNIT</scope>
    <scope>SUBCELLULAR LOCATION</scope>
</reference>
<reference evidence="6 7" key="4">
    <citation type="journal article" date="2006" name="Biochemistry">
        <title>Structural studies of Apo NosL, an accessory protein of the nitrous oxide reductase system: insights from structural homology with MerB, a mercury resistance protein.</title>
        <authorList>
            <person name="Taubner L.M."/>
            <person name="McGuirl M.A."/>
            <person name="Dooley D.M."/>
            <person name="Copie V."/>
        </authorList>
    </citation>
    <scope>STRUCTURE BY NMR OF 21-193</scope>
</reference>
<sequence length="193" mass="20449">MRTRLRFVLVAAALALLSACKEDVAQSIVPQDMTPETLGHYCQMNLLEHPGPKAQIFLEGSPAPLFFSQVRDAIAYARGPEQIAPILVIYVNDMGAAGATWDQPGDGNWIAADKAFYVVGSARRGGMGAPEAVPFSSRDEAAAFVLAEGGQVLALADITDAMVLTPVETGSEPRADDEDYLGRLRALPHPAGG</sequence>
<accession>O68481</accession>
<proteinExistence type="evidence at protein level"/>
<protein>
    <recommendedName>
        <fullName evidence="5">Copper-binding lipoprotein NosL</fullName>
    </recommendedName>
</protein>
<comment type="function">
    <text evidence="2">May act as a metallochaperone involved in nitrous oxide reductase assembly. Specifically binds Cu(+).</text>
</comment>
<comment type="subunit">
    <text evidence="2">Monomer. Apo-NosL can form homodimers.</text>
</comment>
<comment type="subcellular location">
    <subcellularLocation>
        <location evidence="1">Cell membrane</location>
        <topology evidence="1">Lipid-anchor</topology>
        <orientation evidence="2">Periplasmic side</orientation>
    </subcellularLocation>
</comment>
<comment type="similarity">
    <text evidence="5">Belongs to the NosL family.</text>
</comment>
<evidence type="ECO:0000255" key="1">
    <source>
        <dbReference type="PROSITE-ProRule" id="PRU00303"/>
    </source>
</evidence>
<evidence type="ECO:0000269" key="2">
    <source>
    </source>
</evidence>
<evidence type="ECO:0000303" key="3">
    <source>
    </source>
</evidence>
<evidence type="ECO:0000303" key="4">
    <source>
    </source>
</evidence>
<evidence type="ECO:0000305" key="5"/>
<evidence type="ECO:0007744" key="6">
    <source>
        <dbReference type="PDB" id="2HPU"/>
    </source>
</evidence>
<evidence type="ECO:0007744" key="7">
    <source>
        <dbReference type="PDB" id="2HQ3"/>
    </source>
</evidence>
<evidence type="ECO:0007829" key="8">
    <source>
        <dbReference type="PDB" id="2HPU"/>
    </source>
</evidence>
<keyword id="KW-0002">3D-structure</keyword>
<keyword id="KW-1003">Cell membrane</keyword>
<keyword id="KW-0143">Chaperone</keyword>
<keyword id="KW-0186">Copper</keyword>
<keyword id="KW-0449">Lipoprotein</keyword>
<keyword id="KW-0472">Membrane</keyword>
<keyword id="KW-0479">Metal-binding</keyword>
<keyword id="KW-0564">Palmitate</keyword>
<keyword id="KW-0732">Signal</keyword>
<feature type="signal peptide" evidence="1">
    <location>
        <begin position="1"/>
        <end position="19"/>
    </location>
</feature>
<feature type="chain" id="PRO_5007697109" description="Copper-binding lipoprotein NosL" evidence="1">
    <location>
        <begin position="20"/>
        <end position="193"/>
    </location>
</feature>
<feature type="lipid moiety-binding region" description="N-palmitoyl cysteine" evidence="1">
    <location>
        <position position="20"/>
    </location>
</feature>
<feature type="lipid moiety-binding region" description="S-diacylglycerol cysteine" evidence="1">
    <location>
        <position position="20"/>
    </location>
</feature>
<feature type="strand" evidence="8">
    <location>
        <begin position="54"/>
        <end position="58"/>
    </location>
</feature>
<feature type="strand" evidence="8">
    <location>
        <begin position="62"/>
        <end position="68"/>
    </location>
</feature>
<feature type="helix" evidence="8">
    <location>
        <begin position="70"/>
        <end position="77"/>
    </location>
</feature>
<feature type="helix" evidence="8">
    <location>
        <begin position="80"/>
        <end position="83"/>
    </location>
</feature>
<feature type="strand" evidence="8">
    <location>
        <begin position="86"/>
        <end position="94"/>
    </location>
</feature>
<feature type="strand" evidence="8">
    <location>
        <begin position="108"/>
        <end position="110"/>
    </location>
</feature>
<feature type="helix" evidence="8">
    <location>
        <begin position="112"/>
        <end position="114"/>
    </location>
</feature>
<feature type="strand" evidence="8">
    <location>
        <begin position="115"/>
        <end position="124"/>
    </location>
</feature>
<feature type="strand" evidence="8">
    <location>
        <begin position="126"/>
        <end position="128"/>
    </location>
</feature>
<feature type="strand" evidence="8">
    <location>
        <begin position="132"/>
        <end position="136"/>
    </location>
</feature>
<feature type="helix" evidence="8">
    <location>
        <begin position="138"/>
        <end position="147"/>
    </location>
</feature>
<feature type="strand" evidence="8">
    <location>
        <begin position="149"/>
        <end position="154"/>
    </location>
</feature>
<feature type="helix" evidence="8">
    <location>
        <begin position="155"/>
        <end position="157"/>
    </location>
</feature>
<feature type="helix" evidence="8">
    <location>
        <begin position="160"/>
        <end position="163"/>
    </location>
</feature>
<feature type="strand" evidence="8">
    <location>
        <begin position="173"/>
        <end position="176"/>
    </location>
</feature>
<dbReference type="EMBL" id="Y15161">
    <property type="protein sequence ID" value="CAA75429.1"/>
    <property type="molecule type" value="Genomic_DNA"/>
</dbReference>
<dbReference type="EMBL" id="AF047429">
    <property type="protein sequence ID" value="AAD09161.1"/>
    <property type="molecule type" value="Genomic_DNA"/>
</dbReference>
<dbReference type="PDB" id="2HPU">
    <property type="method" value="NMR"/>
    <property type="chains" value="A=21-193"/>
</dbReference>
<dbReference type="PDB" id="2HQ3">
    <property type="method" value="NMR"/>
    <property type="chains" value="A=21-193"/>
</dbReference>
<dbReference type="PDBsum" id="2HPU"/>
<dbReference type="PDBsum" id="2HQ3"/>
<dbReference type="SMR" id="O68481"/>
<dbReference type="EvolutionaryTrace" id="O68481"/>
<dbReference type="GO" id="GO:0005886">
    <property type="term" value="C:plasma membrane"/>
    <property type="evidence" value="ECO:0007669"/>
    <property type="project" value="UniProtKB-SubCell"/>
</dbReference>
<dbReference type="GO" id="GO:0046872">
    <property type="term" value="F:metal ion binding"/>
    <property type="evidence" value="ECO:0007669"/>
    <property type="project" value="UniProtKB-KW"/>
</dbReference>
<dbReference type="Gene3D" id="3.30.70.2050">
    <property type="match status" value="1"/>
</dbReference>
<dbReference type="Gene3D" id="3.30.70.2060">
    <property type="match status" value="1"/>
</dbReference>
<dbReference type="InterPro" id="IPR008719">
    <property type="entry name" value="N2O_reductase_NosL"/>
</dbReference>
<dbReference type="PANTHER" id="PTHR41247">
    <property type="entry name" value="HTH-TYPE TRANSCRIPTIONAL REPRESSOR YCNK"/>
    <property type="match status" value="1"/>
</dbReference>
<dbReference type="PANTHER" id="PTHR41247:SF1">
    <property type="entry name" value="HTH-TYPE TRANSCRIPTIONAL REPRESSOR YCNK"/>
    <property type="match status" value="1"/>
</dbReference>
<dbReference type="Pfam" id="PF05573">
    <property type="entry name" value="NosL"/>
    <property type="match status" value="1"/>
</dbReference>
<dbReference type="SUPFAM" id="SSF160387">
    <property type="entry name" value="NosL/MerB-like"/>
    <property type="match status" value="1"/>
</dbReference>
<dbReference type="PROSITE" id="PS51257">
    <property type="entry name" value="PROKAR_LIPOPROTEIN"/>
    <property type="match status" value="1"/>
</dbReference>
<gene>
    <name evidence="3 4" type="primary">nosL</name>
</gene>